<accession>Q8I6U3</accession>
<gene>
    <name type="primary">cpx1</name>
</gene>
<name>CPLX_HIRME</name>
<keyword id="KW-0175">Coiled coil</keyword>
<keyword id="KW-0268">Exocytosis</keyword>
<keyword id="KW-0449">Lipoprotein</keyword>
<keyword id="KW-0472">Membrane</keyword>
<keyword id="KW-0488">Methylation</keyword>
<keyword id="KW-0532">Neurotransmitter transport</keyword>
<keyword id="KW-0636">Prenylation</keyword>
<keyword id="KW-0813">Transport</keyword>
<reference key="1">
    <citation type="journal article" date="2004" name="Gene Expr. Patterns">
        <title>Cloning and expression of a leech complexin.</title>
        <authorList>
            <person name="Dykes I.M."/>
            <person name="Davies J.A."/>
        </authorList>
    </citation>
    <scope>NUCLEOTIDE SEQUENCE [MRNA]</scope>
    <scope>TISSUE SPECIFICITY</scope>
    <source>
        <tissue>CNS</tissue>
    </source>
</reference>
<organism>
    <name type="scientific">Hirudo medicinalis</name>
    <name type="common">Medicinal leech</name>
    <dbReference type="NCBI Taxonomy" id="6421"/>
    <lineage>
        <taxon>Eukaryota</taxon>
        <taxon>Metazoa</taxon>
        <taxon>Spiralia</taxon>
        <taxon>Lophotrochozoa</taxon>
        <taxon>Annelida</taxon>
        <taxon>Clitellata</taxon>
        <taxon>Hirudinea</taxon>
        <taxon>Hirudinida</taxon>
        <taxon>Hirudiniformes</taxon>
        <taxon>Hirudinidae</taxon>
        <taxon>Hirudo</taxon>
    </lineage>
</organism>
<dbReference type="EMBL" id="AJ512832">
    <property type="protein sequence ID" value="CAD55800.1"/>
    <property type="molecule type" value="mRNA"/>
</dbReference>
<dbReference type="SMR" id="Q8I6U3"/>
<dbReference type="GO" id="GO:0031201">
    <property type="term" value="C:SNARE complex"/>
    <property type="evidence" value="ECO:0007669"/>
    <property type="project" value="TreeGrafter"/>
</dbReference>
<dbReference type="GO" id="GO:0043195">
    <property type="term" value="C:terminal bouton"/>
    <property type="evidence" value="ECO:0007669"/>
    <property type="project" value="TreeGrafter"/>
</dbReference>
<dbReference type="GO" id="GO:0019905">
    <property type="term" value="F:syntaxin binding"/>
    <property type="evidence" value="ECO:0007669"/>
    <property type="project" value="InterPro"/>
</dbReference>
<dbReference type="GO" id="GO:0046928">
    <property type="term" value="P:regulation of neurotransmitter secretion"/>
    <property type="evidence" value="ECO:0007669"/>
    <property type="project" value="TreeGrafter"/>
</dbReference>
<dbReference type="GO" id="GO:0016079">
    <property type="term" value="P:synaptic vesicle exocytosis"/>
    <property type="evidence" value="ECO:0007669"/>
    <property type="project" value="TreeGrafter"/>
</dbReference>
<dbReference type="CDD" id="cd22808">
    <property type="entry name" value="Complexin_NTD_CPLX_I_II"/>
    <property type="match status" value="1"/>
</dbReference>
<dbReference type="FunFam" id="1.20.5.580:FF:000002">
    <property type="entry name" value="Complexin, isoform AB"/>
    <property type="match status" value="1"/>
</dbReference>
<dbReference type="Gene3D" id="1.20.5.580">
    <property type="entry name" value="Single Helix bin"/>
    <property type="match status" value="1"/>
</dbReference>
<dbReference type="InterPro" id="IPR008849">
    <property type="entry name" value="Synaphin"/>
</dbReference>
<dbReference type="PANTHER" id="PTHR16705">
    <property type="entry name" value="COMPLEXIN"/>
    <property type="match status" value="1"/>
</dbReference>
<dbReference type="PANTHER" id="PTHR16705:SF4">
    <property type="entry name" value="COMPLEXIN"/>
    <property type="match status" value="1"/>
</dbReference>
<dbReference type="Pfam" id="PF05835">
    <property type="entry name" value="Synaphin"/>
    <property type="match status" value="1"/>
</dbReference>
<dbReference type="SUPFAM" id="SSF58038">
    <property type="entry name" value="SNARE fusion complex"/>
    <property type="match status" value="1"/>
</dbReference>
<proteinExistence type="evidence at transcript level"/>
<evidence type="ECO:0000250" key="1"/>
<evidence type="ECO:0000255" key="2"/>
<evidence type="ECO:0000256" key="3">
    <source>
        <dbReference type="SAM" id="MobiDB-lite"/>
    </source>
</evidence>
<evidence type="ECO:0000269" key="4">
    <source>
    </source>
</evidence>
<evidence type="ECO:0000305" key="5"/>
<protein>
    <recommendedName>
        <fullName>Complexin-1</fullName>
    </recommendedName>
</protein>
<feature type="chain" id="PRO_0000240239" description="Complexin-1">
    <location>
        <begin position="1"/>
        <end position="141"/>
    </location>
</feature>
<feature type="propeptide" id="PRO_0000240240" description="Removed in mature form" evidence="2">
    <location>
        <begin position="142"/>
        <end position="144"/>
    </location>
</feature>
<feature type="region of interest" description="Disordered" evidence="3">
    <location>
        <begin position="1"/>
        <end position="119"/>
    </location>
</feature>
<feature type="coiled-coil region" evidence="2">
    <location>
        <begin position="29"/>
        <end position="67"/>
    </location>
</feature>
<feature type="compositionally biased region" description="Gly residues" evidence="3">
    <location>
        <begin position="1"/>
        <end position="10"/>
    </location>
</feature>
<feature type="compositionally biased region" description="Basic and acidic residues" evidence="3">
    <location>
        <begin position="18"/>
        <end position="27"/>
    </location>
</feature>
<feature type="compositionally biased region" description="Basic and acidic residues" evidence="3">
    <location>
        <begin position="36"/>
        <end position="86"/>
    </location>
</feature>
<feature type="compositionally biased region" description="Polar residues" evidence="3">
    <location>
        <begin position="103"/>
        <end position="112"/>
    </location>
</feature>
<feature type="modified residue" description="Cysteine methyl ester" evidence="2">
    <location>
        <position position="141"/>
    </location>
</feature>
<feature type="lipid moiety-binding region" description="S-farnesyl cysteine" evidence="2">
    <location>
        <position position="141"/>
    </location>
</feature>
<comment type="function">
    <text evidence="1">Positively regulates a late step in synaptic vesicle exocytosis.</text>
</comment>
<comment type="subunit">
    <text evidence="1">Binds to the SNARE core complex containing SNAP25, synaptobrevin and syntaxin-1.</text>
</comment>
<comment type="subcellular location">
    <subcellularLocation>
        <location evidence="5">Membrane</location>
        <topology evidence="5">Lipid-anchor</topology>
    </subcellularLocation>
</comment>
<comment type="tissue specificity">
    <text evidence="4">Expressed in a subset of neurons in the central nervous system, including large serotoninergic Retzius neurons and pressure-sensitive P cells.</text>
</comment>
<comment type="similarity">
    <text evidence="5">Belongs to the complexin/synaphin family.</text>
</comment>
<sequence>MVSFLGGGLLGNPLSGALEEKEDKKEGDEEEDPEIAEAKREAEEKRNEKYRKMEEEREVMRQGIRDKYHIQKKELPKEDPGLEGRLGRKKKSPDEAVEGGDPLQSSAQSSGFPKNLDDLTAKVKELPGTVMTTVSGATDKCNLQ</sequence>